<sequence>MSKEKFERTKPHVNVGTIGHVDHGKTTLTAAITTVLAKHYGGAARAFDQIDNAPEEKARGITINTSHVEYDTPTRHYAHVDCPGHADYVKNMITGAAQMDGAILVVAATDGPMPQTREHILLGRQVGVPYIIVFLNKCDMVDDEELLELVEMEVRELLSQYDFPGDDTPIVRGSALQALNGVAEWEEKILELANHLDTYIPEPERAIDQPFLLPIEDVFSISGRGTVVTGRVERGIIRTGDEVEIVGIKDTAKTTVTGVEMFRKLLDEGRAGENIGALLRGTKREEIERGQVLAKPGSITPHTDFESEVYVLSKDEGGRHTPFFKGYRPQFYFRTTDVTGTIELPEGVEMVMPGDNIKMTVSLIHPIAMDQGLRFAIREGGRTVGAGVVAKIIK</sequence>
<reference key="1">
    <citation type="journal article" date="2007" name="Genome Biol.">
        <title>Characterization and modeling of the Haemophilus influenzae core and supragenomes based on the complete genomic sequences of Rd and 12 clinical nontypeable strains.</title>
        <authorList>
            <person name="Hogg J.S."/>
            <person name="Hu F.Z."/>
            <person name="Janto B."/>
            <person name="Boissy R."/>
            <person name="Hayes J."/>
            <person name="Keefe R."/>
            <person name="Post J.C."/>
            <person name="Ehrlich G.D."/>
        </authorList>
    </citation>
    <scope>NUCLEOTIDE SEQUENCE [LARGE SCALE GENOMIC DNA]</scope>
    <source>
        <strain>PittEE</strain>
    </source>
</reference>
<comment type="function">
    <text evidence="2">GTP hydrolase that promotes the GTP-dependent binding of aminoacyl-tRNA to the A-site of ribosomes during protein biosynthesis.</text>
</comment>
<comment type="catalytic activity">
    <reaction evidence="2">
        <text>GTP + H2O = GDP + phosphate + H(+)</text>
        <dbReference type="Rhea" id="RHEA:19669"/>
        <dbReference type="ChEBI" id="CHEBI:15377"/>
        <dbReference type="ChEBI" id="CHEBI:15378"/>
        <dbReference type="ChEBI" id="CHEBI:37565"/>
        <dbReference type="ChEBI" id="CHEBI:43474"/>
        <dbReference type="ChEBI" id="CHEBI:58189"/>
        <dbReference type="EC" id="3.6.5.3"/>
    </reaction>
    <physiologicalReaction direction="left-to-right" evidence="2">
        <dbReference type="Rhea" id="RHEA:19670"/>
    </physiologicalReaction>
</comment>
<comment type="subunit">
    <text evidence="2">Monomer.</text>
</comment>
<comment type="subcellular location">
    <subcellularLocation>
        <location evidence="2">Cytoplasm</location>
    </subcellularLocation>
</comment>
<comment type="similarity">
    <text evidence="2">Belongs to the TRAFAC class translation factor GTPase superfamily. Classic translation factor GTPase family. EF-Tu/EF-1A subfamily.</text>
</comment>
<accession>A5U9R1</accession>
<dbReference type="EC" id="3.6.5.3" evidence="2"/>
<dbReference type="EMBL" id="CP000671">
    <property type="protein sequence ID" value="ABQ97512.1"/>
    <property type="molecule type" value="Genomic_DNA"/>
</dbReference>
<dbReference type="EMBL" id="CP000671">
    <property type="protein sequence ID" value="ABQ99105.1"/>
    <property type="molecule type" value="Genomic_DNA"/>
</dbReference>
<dbReference type="SMR" id="A5U9R1"/>
<dbReference type="KEGG" id="hip:CGSHiEE_00070"/>
<dbReference type="KEGG" id="hip:CGSHiEE_09060"/>
<dbReference type="HOGENOM" id="CLU_007265_0_2_6"/>
<dbReference type="GO" id="GO:0005829">
    <property type="term" value="C:cytosol"/>
    <property type="evidence" value="ECO:0007669"/>
    <property type="project" value="TreeGrafter"/>
</dbReference>
<dbReference type="GO" id="GO:0005525">
    <property type="term" value="F:GTP binding"/>
    <property type="evidence" value="ECO:0007669"/>
    <property type="project" value="UniProtKB-UniRule"/>
</dbReference>
<dbReference type="GO" id="GO:0003924">
    <property type="term" value="F:GTPase activity"/>
    <property type="evidence" value="ECO:0007669"/>
    <property type="project" value="InterPro"/>
</dbReference>
<dbReference type="GO" id="GO:0097216">
    <property type="term" value="F:guanosine tetraphosphate binding"/>
    <property type="evidence" value="ECO:0007669"/>
    <property type="project" value="UniProtKB-ARBA"/>
</dbReference>
<dbReference type="GO" id="GO:0003746">
    <property type="term" value="F:translation elongation factor activity"/>
    <property type="evidence" value="ECO:0007669"/>
    <property type="project" value="UniProtKB-UniRule"/>
</dbReference>
<dbReference type="CDD" id="cd01884">
    <property type="entry name" value="EF_Tu"/>
    <property type="match status" value="1"/>
</dbReference>
<dbReference type="CDD" id="cd03697">
    <property type="entry name" value="EFTU_II"/>
    <property type="match status" value="1"/>
</dbReference>
<dbReference type="CDD" id="cd03707">
    <property type="entry name" value="EFTU_III"/>
    <property type="match status" value="1"/>
</dbReference>
<dbReference type="FunFam" id="2.40.30.10:FF:000001">
    <property type="entry name" value="Elongation factor Tu"/>
    <property type="match status" value="1"/>
</dbReference>
<dbReference type="FunFam" id="3.40.50.300:FF:000003">
    <property type="entry name" value="Elongation factor Tu"/>
    <property type="match status" value="1"/>
</dbReference>
<dbReference type="Gene3D" id="3.40.50.300">
    <property type="entry name" value="P-loop containing nucleotide triphosphate hydrolases"/>
    <property type="match status" value="1"/>
</dbReference>
<dbReference type="Gene3D" id="2.40.30.10">
    <property type="entry name" value="Translation factors"/>
    <property type="match status" value="2"/>
</dbReference>
<dbReference type="HAMAP" id="MF_00118_B">
    <property type="entry name" value="EF_Tu_B"/>
    <property type="match status" value="1"/>
</dbReference>
<dbReference type="InterPro" id="IPR041709">
    <property type="entry name" value="EF-Tu_GTP-bd"/>
</dbReference>
<dbReference type="InterPro" id="IPR050055">
    <property type="entry name" value="EF-Tu_GTPase"/>
</dbReference>
<dbReference type="InterPro" id="IPR004161">
    <property type="entry name" value="EFTu-like_2"/>
</dbReference>
<dbReference type="InterPro" id="IPR033720">
    <property type="entry name" value="EFTU_2"/>
</dbReference>
<dbReference type="InterPro" id="IPR031157">
    <property type="entry name" value="G_TR_CS"/>
</dbReference>
<dbReference type="InterPro" id="IPR027417">
    <property type="entry name" value="P-loop_NTPase"/>
</dbReference>
<dbReference type="InterPro" id="IPR005225">
    <property type="entry name" value="Small_GTP-bd"/>
</dbReference>
<dbReference type="InterPro" id="IPR000795">
    <property type="entry name" value="T_Tr_GTP-bd_dom"/>
</dbReference>
<dbReference type="InterPro" id="IPR009000">
    <property type="entry name" value="Transl_B-barrel_sf"/>
</dbReference>
<dbReference type="InterPro" id="IPR009001">
    <property type="entry name" value="Transl_elong_EF1A/Init_IF2_C"/>
</dbReference>
<dbReference type="InterPro" id="IPR004541">
    <property type="entry name" value="Transl_elong_EFTu/EF1A_bac/org"/>
</dbReference>
<dbReference type="InterPro" id="IPR004160">
    <property type="entry name" value="Transl_elong_EFTu/EF1A_C"/>
</dbReference>
<dbReference type="NCBIfam" id="TIGR00485">
    <property type="entry name" value="EF-Tu"/>
    <property type="match status" value="1"/>
</dbReference>
<dbReference type="NCBIfam" id="NF000766">
    <property type="entry name" value="PRK00049.1"/>
    <property type="match status" value="1"/>
</dbReference>
<dbReference type="NCBIfam" id="NF009372">
    <property type="entry name" value="PRK12735.1"/>
    <property type="match status" value="1"/>
</dbReference>
<dbReference type="NCBIfam" id="NF009373">
    <property type="entry name" value="PRK12736.1"/>
    <property type="match status" value="1"/>
</dbReference>
<dbReference type="NCBIfam" id="TIGR00231">
    <property type="entry name" value="small_GTP"/>
    <property type="match status" value="1"/>
</dbReference>
<dbReference type="PANTHER" id="PTHR43721:SF22">
    <property type="entry name" value="ELONGATION FACTOR TU, MITOCHONDRIAL"/>
    <property type="match status" value="1"/>
</dbReference>
<dbReference type="PANTHER" id="PTHR43721">
    <property type="entry name" value="ELONGATION FACTOR TU-RELATED"/>
    <property type="match status" value="1"/>
</dbReference>
<dbReference type="Pfam" id="PF00009">
    <property type="entry name" value="GTP_EFTU"/>
    <property type="match status" value="1"/>
</dbReference>
<dbReference type="Pfam" id="PF03144">
    <property type="entry name" value="GTP_EFTU_D2"/>
    <property type="match status" value="1"/>
</dbReference>
<dbReference type="Pfam" id="PF03143">
    <property type="entry name" value="GTP_EFTU_D3"/>
    <property type="match status" value="1"/>
</dbReference>
<dbReference type="PRINTS" id="PR00315">
    <property type="entry name" value="ELONGATNFCT"/>
</dbReference>
<dbReference type="SUPFAM" id="SSF50465">
    <property type="entry name" value="EF-Tu/eEF-1alpha/eIF2-gamma C-terminal domain"/>
    <property type="match status" value="1"/>
</dbReference>
<dbReference type="SUPFAM" id="SSF52540">
    <property type="entry name" value="P-loop containing nucleoside triphosphate hydrolases"/>
    <property type="match status" value="1"/>
</dbReference>
<dbReference type="SUPFAM" id="SSF50447">
    <property type="entry name" value="Translation proteins"/>
    <property type="match status" value="1"/>
</dbReference>
<dbReference type="PROSITE" id="PS00301">
    <property type="entry name" value="G_TR_1"/>
    <property type="match status" value="1"/>
</dbReference>
<dbReference type="PROSITE" id="PS51722">
    <property type="entry name" value="G_TR_2"/>
    <property type="match status" value="1"/>
</dbReference>
<protein>
    <recommendedName>
        <fullName evidence="2">Elongation factor Tu</fullName>
        <shortName evidence="2">EF-Tu</shortName>
        <ecNumber evidence="2">3.6.5.3</ecNumber>
    </recommendedName>
</protein>
<evidence type="ECO:0000250" key="1"/>
<evidence type="ECO:0000255" key="2">
    <source>
        <dbReference type="HAMAP-Rule" id="MF_00118"/>
    </source>
</evidence>
<gene>
    <name evidence="2" type="primary">tuf1</name>
    <name type="ordered locus">CGSHiEE_00070</name>
</gene>
<gene>
    <name evidence="2" type="primary">tuf2</name>
    <name type="ordered locus">CGSHiEE_09060</name>
</gene>
<feature type="chain" id="PRO_0000337399" description="Elongation factor Tu">
    <location>
        <begin position="1"/>
        <end position="394"/>
    </location>
</feature>
<feature type="domain" description="tr-type G">
    <location>
        <begin position="10"/>
        <end position="204"/>
    </location>
</feature>
<feature type="region of interest" description="G1" evidence="1">
    <location>
        <begin position="19"/>
        <end position="26"/>
    </location>
</feature>
<feature type="region of interest" description="G2" evidence="1">
    <location>
        <begin position="60"/>
        <end position="64"/>
    </location>
</feature>
<feature type="region of interest" description="G3" evidence="1">
    <location>
        <begin position="81"/>
        <end position="84"/>
    </location>
</feature>
<feature type="region of interest" description="G4" evidence="1">
    <location>
        <begin position="136"/>
        <end position="139"/>
    </location>
</feature>
<feature type="region of interest" description="G5" evidence="1">
    <location>
        <begin position="174"/>
        <end position="176"/>
    </location>
</feature>
<feature type="binding site" evidence="2">
    <location>
        <begin position="19"/>
        <end position="26"/>
    </location>
    <ligand>
        <name>GTP</name>
        <dbReference type="ChEBI" id="CHEBI:37565"/>
    </ligand>
</feature>
<feature type="binding site" evidence="2">
    <location>
        <position position="26"/>
    </location>
    <ligand>
        <name>Mg(2+)</name>
        <dbReference type="ChEBI" id="CHEBI:18420"/>
    </ligand>
</feature>
<feature type="binding site" evidence="2">
    <location>
        <begin position="81"/>
        <end position="85"/>
    </location>
    <ligand>
        <name>GTP</name>
        <dbReference type="ChEBI" id="CHEBI:37565"/>
    </ligand>
</feature>
<feature type="binding site" evidence="2">
    <location>
        <begin position="136"/>
        <end position="139"/>
    </location>
    <ligand>
        <name>GTP</name>
        <dbReference type="ChEBI" id="CHEBI:37565"/>
    </ligand>
</feature>
<keyword id="KW-0963">Cytoplasm</keyword>
<keyword id="KW-0251">Elongation factor</keyword>
<keyword id="KW-0342">GTP-binding</keyword>
<keyword id="KW-0378">Hydrolase</keyword>
<keyword id="KW-0460">Magnesium</keyword>
<keyword id="KW-0479">Metal-binding</keyword>
<keyword id="KW-0547">Nucleotide-binding</keyword>
<keyword id="KW-0648">Protein biosynthesis</keyword>
<proteinExistence type="inferred from homology"/>
<name>EFTU_HAEIE</name>
<organism>
    <name type="scientific">Haemophilus influenzae (strain PittEE)</name>
    <dbReference type="NCBI Taxonomy" id="374930"/>
    <lineage>
        <taxon>Bacteria</taxon>
        <taxon>Pseudomonadati</taxon>
        <taxon>Pseudomonadota</taxon>
        <taxon>Gammaproteobacteria</taxon>
        <taxon>Pasteurellales</taxon>
        <taxon>Pasteurellaceae</taxon>
        <taxon>Haemophilus</taxon>
    </lineage>
</organism>